<proteinExistence type="inferred from homology"/>
<dbReference type="EMBL" id="AE001437">
    <property type="protein sequence ID" value="AAK81078.1"/>
    <property type="molecule type" value="Genomic_DNA"/>
</dbReference>
<dbReference type="PIR" id="C97286">
    <property type="entry name" value="C97286"/>
</dbReference>
<dbReference type="RefSeq" id="NP_349738.1">
    <property type="nucleotide sequence ID" value="NC_003030.1"/>
</dbReference>
<dbReference type="RefSeq" id="WP_010966418.1">
    <property type="nucleotide sequence ID" value="NC_003030.1"/>
</dbReference>
<dbReference type="SMR" id="Q97EH2"/>
<dbReference type="STRING" id="272562.CA_C3140"/>
<dbReference type="GeneID" id="44999626"/>
<dbReference type="KEGG" id="cac:CA_C3140"/>
<dbReference type="PATRIC" id="fig|272562.8.peg.3321"/>
<dbReference type="eggNOG" id="COG0048">
    <property type="taxonomic scope" value="Bacteria"/>
</dbReference>
<dbReference type="HOGENOM" id="CLU_104295_1_2_9"/>
<dbReference type="OrthoDB" id="9802366at2"/>
<dbReference type="Proteomes" id="UP000000814">
    <property type="component" value="Chromosome"/>
</dbReference>
<dbReference type="GO" id="GO:0015935">
    <property type="term" value="C:small ribosomal subunit"/>
    <property type="evidence" value="ECO:0007669"/>
    <property type="project" value="InterPro"/>
</dbReference>
<dbReference type="GO" id="GO:0019843">
    <property type="term" value="F:rRNA binding"/>
    <property type="evidence" value="ECO:0007669"/>
    <property type="project" value="UniProtKB-UniRule"/>
</dbReference>
<dbReference type="GO" id="GO:0003735">
    <property type="term" value="F:structural constituent of ribosome"/>
    <property type="evidence" value="ECO:0007669"/>
    <property type="project" value="InterPro"/>
</dbReference>
<dbReference type="GO" id="GO:0000049">
    <property type="term" value="F:tRNA binding"/>
    <property type="evidence" value="ECO:0007669"/>
    <property type="project" value="UniProtKB-UniRule"/>
</dbReference>
<dbReference type="GO" id="GO:0006412">
    <property type="term" value="P:translation"/>
    <property type="evidence" value="ECO:0007669"/>
    <property type="project" value="UniProtKB-UniRule"/>
</dbReference>
<dbReference type="CDD" id="cd03368">
    <property type="entry name" value="Ribosomal_S12"/>
    <property type="match status" value="1"/>
</dbReference>
<dbReference type="FunFam" id="2.40.50.140:FF:000001">
    <property type="entry name" value="30S ribosomal protein S12"/>
    <property type="match status" value="1"/>
</dbReference>
<dbReference type="Gene3D" id="2.40.50.140">
    <property type="entry name" value="Nucleic acid-binding proteins"/>
    <property type="match status" value="1"/>
</dbReference>
<dbReference type="HAMAP" id="MF_00403_B">
    <property type="entry name" value="Ribosomal_uS12_B"/>
    <property type="match status" value="1"/>
</dbReference>
<dbReference type="InterPro" id="IPR012340">
    <property type="entry name" value="NA-bd_OB-fold"/>
</dbReference>
<dbReference type="InterPro" id="IPR006032">
    <property type="entry name" value="Ribosomal_uS12"/>
</dbReference>
<dbReference type="InterPro" id="IPR005679">
    <property type="entry name" value="Ribosomal_uS12_bac"/>
</dbReference>
<dbReference type="NCBIfam" id="TIGR00981">
    <property type="entry name" value="rpsL_bact"/>
    <property type="match status" value="1"/>
</dbReference>
<dbReference type="PANTHER" id="PTHR11652">
    <property type="entry name" value="30S RIBOSOMAL PROTEIN S12 FAMILY MEMBER"/>
    <property type="match status" value="1"/>
</dbReference>
<dbReference type="Pfam" id="PF00164">
    <property type="entry name" value="Ribosom_S12_S23"/>
    <property type="match status" value="1"/>
</dbReference>
<dbReference type="PIRSF" id="PIRSF002133">
    <property type="entry name" value="Ribosomal_S12/S23"/>
    <property type="match status" value="1"/>
</dbReference>
<dbReference type="PRINTS" id="PR01034">
    <property type="entry name" value="RIBOSOMALS12"/>
</dbReference>
<dbReference type="SUPFAM" id="SSF50249">
    <property type="entry name" value="Nucleic acid-binding proteins"/>
    <property type="match status" value="1"/>
</dbReference>
<dbReference type="PROSITE" id="PS00055">
    <property type="entry name" value="RIBOSOMAL_S12"/>
    <property type="match status" value="1"/>
</dbReference>
<keyword id="KW-0488">Methylation</keyword>
<keyword id="KW-1185">Reference proteome</keyword>
<keyword id="KW-0687">Ribonucleoprotein</keyword>
<keyword id="KW-0689">Ribosomal protein</keyword>
<keyword id="KW-0694">RNA-binding</keyword>
<keyword id="KW-0699">rRNA-binding</keyword>
<keyword id="KW-0820">tRNA-binding</keyword>
<organism>
    <name type="scientific">Clostridium acetobutylicum (strain ATCC 824 / DSM 792 / JCM 1419 / IAM 19013 / LMG 5710 / NBRC 13948 / NRRL B-527 / VKM B-1787 / 2291 / W)</name>
    <dbReference type="NCBI Taxonomy" id="272562"/>
    <lineage>
        <taxon>Bacteria</taxon>
        <taxon>Bacillati</taxon>
        <taxon>Bacillota</taxon>
        <taxon>Clostridia</taxon>
        <taxon>Eubacteriales</taxon>
        <taxon>Clostridiaceae</taxon>
        <taxon>Clostridium</taxon>
    </lineage>
</organism>
<name>RS12_CLOAB</name>
<reference key="1">
    <citation type="journal article" date="2001" name="J. Bacteriol.">
        <title>Genome sequence and comparative analysis of the solvent-producing bacterium Clostridium acetobutylicum.</title>
        <authorList>
            <person name="Noelling J."/>
            <person name="Breton G."/>
            <person name="Omelchenko M.V."/>
            <person name="Makarova K.S."/>
            <person name="Zeng Q."/>
            <person name="Gibson R."/>
            <person name="Lee H.M."/>
            <person name="Dubois J."/>
            <person name="Qiu D."/>
            <person name="Hitti J."/>
            <person name="Wolf Y.I."/>
            <person name="Tatusov R.L."/>
            <person name="Sabathe F."/>
            <person name="Doucette-Stamm L.A."/>
            <person name="Soucaille P."/>
            <person name="Daly M.J."/>
            <person name="Bennett G.N."/>
            <person name="Koonin E.V."/>
            <person name="Smith D.R."/>
        </authorList>
    </citation>
    <scope>NUCLEOTIDE SEQUENCE [LARGE SCALE GENOMIC DNA]</scope>
    <source>
        <strain>ATCC 824 / DSM 792 / JCM 1419 / IAM 19013 / LMG 5710 / NBRC 13948 / NRRL B-527 / VKM B-1787 / 2291 / W</strain>
    </source>
</reference>
<gene>
    <name evidence="2" type="primary">rpsL</name>
    <name type="ordered locus">CA_C3140</name>
</gene>
<comment type="function">
    <text evidence="2">With S4 and S5 plays an important role in translational accuracy.</text>
</comment>
<comment type="function">
    <text evidence="2">Interacts with and stabilizes bases of the 16S rRNA that are involved in tRNA selection in the A site and with the mRNA backbone. Located at the interface of the 30S and 50S subunits, it traverses the body of the 30S subunit contacting proteins on the other side and probably holding the rRNA structure together. The combined cluster of proteins S8, S12 and S17 appears to hold together the shoulder and platform of the 30S subunit.</text>
</comment>
<comment type="subunit">
    <text evidence="2">Part of the 30S ribosomal subunit. Contacts proteins S8 and S17. May interact with IF1 in the 30S initiation complex.</text>
</comment>
<comment type="similarity">
    <text evidence="2">Belongs to the universal ribosomal protein uS12 family.</text>
</comment>
<evidence type="ECO:0000250" key="1"/>
<evidence type="ECO:0000255" key="2">
    <source>
        <dbReference type="HAMAP-Rule" id="MF_00403"/>
    </source>
</evidence>
<evidence type="ECO:0000305" key="3"/>
<accession>Q97EH2</accession>
<protein>
    <recommendedName>
        <fullName evidence="2">Small ribosomal subunit protein uS12</fullName>
    </recommendedName>
    <alternativeName>
        <fullName evidence="3">30S ribosomal protein S12</fullName>
    </alternativeName>
</protein>
<feature type="chain" id="PRO_0000146209" description="Small ribosomal subunit protein uS12">
    <location>
        <begin position="1"/>
        <end position="125"/>
    </location>
</feature>
<feature type="modified residue" description="3-methylthioaspartic acid" evidence="1">
    <location>
        <position position="89"/>
    </location>
</feature>
<sequence>MPTISQLVRKGRKTLAAKSTAPALKECPQKRGVCTVVKTTTPKKPNSALRKIARVRLTNGYEVTAYIPGVGHNLQEHSVVLIRGGRVKDLPGVRYHIVRGTLDAAGVADRKQARSKYGAKKPKQK</sequence>